<keyword id="KW-0963">Cytoplasm</keyword>
<keyword id="KW-0275">Fatty acid biosynthesis</keyword>
<keyword id="KW-0276">Fatty acid metabolism</keyword>
<keyword id="KW-0444">Lipid biosynthesis</keyword>
<keyword id="KW-0443">Lipid metabolism</keyword>
<keyword id="KW-0460">Magnesium</keyword>
<keyword id="KW-0479">Metal-binding</keyword>
<keyword id="KW-1185">Reference proteome</keyword>
<keyword id="KW-0808">Transferase</keyword>
<evidence type="ECO:0000255" key="1">
    <source>
        <dbReference type="HAMAP-Rule" id="MF_00101"/>
    </source>
</evidence>
<sequence>MDIVDLVRIEKAYDRYGRKFLERIMTGEEIELCLKKPSPLASIAGRFAAKEAVVKALGTGITAAVHWKSFEVLNDPAGKPFVRSSQPGLLPEGCSIKISIAHDRHSAVATALLCRGPES</sequence>
<gene>
    <name evidence="1" type="primary">acpS</name>
    <name type="ordered locus">Plut_0271</name>
</gene>
<organism>
    <name type="scientific">Chlorobium luteolum (strain DSM 273 / BCRC 81028 / 2530)</name>
    <name type="common">Pelodictyon luteolum</name>
    <dbReference type="NCBI Taxonomy" id="319225"/>
    <lineage>
        <taxon>Bacteria</taxon>
        <taxon>Pseudomonadati</taxon>
        <taxon>Chlorobiota</taxon>
        <taxon>Chlorobiia</taxon>
        <taxon>Chlorobiales</taxon>
        <taxon>Chlorobiaceae</taxon>
        <taxon>Chlorobium/Pelodictyon group</taxon>
        <taxon>Pelodictyon</taxon>
    </lineage>
</organism>
<reference key="1">
    <citation type="submission" date="2005-08" db="EMBL/GenBank/DDBJ databases">
        <title>Complete sequence of Pelodictyon luteolum DSM 273.</title>
        <authorList>
            <consortium name="US DOE Joint Genome Institute"/>
            <person name="Copeland A."/>
            <person name="Lucas S."/>
            <person name="Lapidus A."/>
            <person name="Barry K."/>
            <person name="Detter J.C."/>
            <person name="Glavina T."/>
            <person name="Hammon N."/>
            <person name="Israni S."/>
            <person name="Pitluck S."/>
            <person name="Bryant D."/>
            <person name="Schmutz J."/>
            <person name="Larimer F."/>
            <person name="Land M."/>
            <person name="Kyrpides N."/>
            <person name="Ivanova N."/>
            <person name="Richardson P."/>
        </authorList>
    </citation>
    <scope>NUCLEOTIDE SEQUENCE [LARGE SCALE GENOMIC DNA]</scope>
    <source>
        <strain>DSM 273 / BCRC 81028 / 2530</strain>
    </source>
</reference>
<feature type="chain" id="PRO_0000228297" description="Holo-[acyl-carrier-protein] synthase">
    <location>
        <begin position="1"/>
        <end position="119"/>
    </location>
</feature>
<feature type="binding site" evidence="1">
    <location>
        <position position="2"/>
    </location>
    <ligand>
        <name>Mg(2+)</name>
        <dbReference type="ChEBI" id="CHEBI:18420"/>
    </ligand>
</feature>
<feature type="binding site" evidence="1">
    <location>
        <position position="51"/>
    </location>
    <ligand>
        <name>Mg(2+)</name>
        <dbReference type="ChEBI" id="CHEBI:18420"/>
    </ligand>
</feature>
<name>ACPS_CHLL3</name>
<protein>
    <recommendedName>
        <fullName evidence="1">Holo-[acyl-carrier-protein] synthase</fullName>
        <shortName evidence="1">Holo-ACP synthase</shortName>
        <ecNumber evidence="1">2.7.8.7</ecNumber>
    </recommendedName>
    <alternativeName>
        <fullName evidence="1">4'-phosphopantetheinyl transferase AcpS</fullName>
    </alternativeName>
</protein>
<proteinExistence type="inferred from homology"/>
<comment type="function">
    <text evidence="1">Transfers the 4'-phosphopantetheine moiety from coenzyme A to a Ser of acyl-carrier-protein.</text>
</comment>
<comment type="catalytic activity">
    <reaction evidence="1">
        <text>apo-[ACP] + CoA = holo-[ACP] + adenosine 3',5'-bisphosphate + H(+)</text>
        <dbReference type="Rhea" id="RHEA:12068"/>
        <dbReference type="Rhea" id="RHEA-COMP:9685"/>
        <dbReference type="Rhea" id="RHEA-COMP:9690"/>
        <dbReference type="ChEBI" id="CHEBI:15378"/>
        <dbReference type="ChEBI" id="CHEBI:29999"/>
        <dbReference type="ChEBI" id="CHEBI:57287"/>
        <dbReference type="ChEBI" id="CHEBI:58343"/>
        <dbReference type="ChEBI" id="CHEBI:64479"/>
        <dbReference type="EC" id="2.7.8.7"/>
    </reaction>
</comment>
<comment type="cofactor">
    <cofactor evidence="1">
        <name>Mg(2+)</name>
        <dbReference type="ChEBI" id="CHEBI:18420"/>
    </cofactor>
</comment>
<comment type="subcellular location">
    <subcellularLocation>
        <location evidence="1">Cytoplasm</location>
    </subcellularLocation>
</comment>
<comment type="similarity">
    <text evidence="1">Belongs to the P-Pant transferase superfamily. AcpS family.</text>
</comment>
<accession>Q3B672</accession>
<dbReference type="EC" id="2.7.8.7" evidence="1"/>
<dbReference type="EMBL" id="CP000096">
    <property type="protein sequence ID" value="ABB23159.1"/>
    <property type="molecule type" value="Genomic_DNA"/>
</dbReference>
<dbReference type="SMR" id="Q3B672"/>
<dbReference type="STRING" id="319225.Plut_0271"/>
<dbReference type="KEGG" id="plt:Plut_0271"/>
<dbReference type="eggNOG" id="COG0736">
    <property type="taxonomic scope" value="Bacteria"/>
</dbReference>
<dbReference type="HOGENOM" id="CLU_089696_0_2_10"/>
<dbReference type="OrthoDB" id="517356at2"/>
<dbReference type="Proteomes" id="UP000002709">
    <property type="component" value="Chromosome"/>
</dbReference>
<dbReference type="GO" id="GO:0005737">
    <property type="term" value="C:cytoplasm"/>
    <property type="evidence" value="ECO:0007669"/>
    <property type="project" value="UniProtKB-SubCell"/>
</dbReference>
<dbReference type="GO" id="GO:0008897">
    <property type="term" value="F:holo-[acyl-carrier-protein] synthase activity"/>
    <property type="evidence" value="ECO:0007669"/>
    <property type="project" value="UniProtKB-UniRule"/>
</dbReference>
<dbReference type="GO" id="GO:0000287">
    <property type="term" value="F:magnesium ion binding"/>
    <property type="evidence" value="ECO:0007669"/>
    <property type="project" value="UniProtKB-UniRule"/>
</dbReference>
<dbReference type="GO" id="GO:0006633">
    <property type="term" value="P:fatty acid biosynthetic process"/>
    <property type="evidence" value="ECO:0007669"/>
    <property type="project" value="UniProtKB-UniRule"/>
</dbReference>
<dbReference type="Gene3D" id="3.90.470.20">
    <property type="entry name" value="4'-phosphopantetheinyl transferase domain"/>
    <property type="match status" value="1"/>
</dbReference>
<dbReference type="HAMAP" id="MF_00101">
    <property type="entry name" value="AcpS"/>
    <property type="match status" value="1"/>
</dbReference>
<dbReference type="InterPro" id="IPR008278">
    <property type="entry name" value="4-PPantetheinyl_Trfase_dom"/>
</dbReference>
<dbReference type="InterPro" id="IPR037143">
    <property type="entry name" value="4-PPantetheinyl_Trfase_dom_sf"/>
</dbReference>
<dbReference type="InterPro" id="IPR002582">
    <property type="entry name" value="ACPS"/>
</dbReference>
<dbReference type="InterPro" id="IPR004568">
    <property type="entry name" value="Ppantetheine-prot_Trfase_dom"/>
</dbReference>
<dbReference type="NCBIfam" id="TIGR00516">
    <property type="entry name" value="acpS"/>
    <property type="match status" value="1"/>
</dbReference>
<dbReference type="NCBIfam" id="TIGR00556">
    <property type="entry name" value="pantethn_trn"/>
    <property type="match status" value="1"/>
</dbReference>
<dbReference type="NCBIfam" id="NF011257">
    <property type="entry name" value="PRK14663.1"/>
    <property type="match status" value="1"/>
</dbReference>
<dbReference type="Pfam" id="PF01648">
    <property type="entry name" value="ACPS"/>
    <property type="match status" value="1"/>
</dbReference>
<dbReference type="SUPFAM" id="SSF56214">
    <property type="entry name" value="4'-phosphopantetheinyl transferase"/>
    <property type="match status" value="1"/>
</dbReference>